<name>AL1L1_PONAB</name>
<reference key="1">
    <citation type="submission" date="2004-11" db="EMBL/GenBank/DDBJ databases">
        <authorList>
            <consortium name="The German cDNA consortium"/>
        </authorList>
    </citation>
    <scope>NUCLEOTIDE SEQUENCE [LARGE SCALE MRNA]</scope>
    <source>
        <tissue>Kidney</tissue>
    </source>
</reference>
<accession>Q5RFM9</accession>
<feature type="chain" id="PRO_0000199421" description="Cytosolic 10-formyltetrahydrofolate dehydrogenase">
    <location>
        <begin position="1"/>
        <end position="902"/>
    </location>
</feature>
<feature type="domain" description="Carrier" evidence="6">
    <location>
        <begin position="318"/>
        <end position="395"/>
    </location>
</feature>
<feature type="region of interest" description="Hydrolase domain" evidence="2">
    <location>
        <begin position="1"/>
        <end position="310"/>
    </location>
</feature>
<feature type="region of interest" description="Aldehyde dehydrogenase domain" evidence="2">
    <location>
        <begin position="417"/>
        <end position="902"/>
    </location>
</feature>
<feature type="active site" description="Proton donor" evidence="2">
    <location>
        <position position="106"/>
    </location>
</feature>
<feature type="active site" description="Proton acceptor" evidence="2">
    <location>
        <position position="673"/>
    </location>
</feature>
<feature type="active site" description="Proton donor" evidence="2">
    <location>
        <position position="707"/>
    </location>
</feature>
<feature type="binding site" evidence="1">
    <location>
        <begin position="88"/>
        <end position="90"/>
    </location>
    <ligand>
        <name>(6R)-10-formyltetrahydrofolate</name>
        <dbReference type="ChEBI" id="CHEBI:195366"/>
    </ligand>
</feature>
<feature type="binding site" evidence="1">
    <location>
        <position position="142"/>
    </location>
    <ligand>
        <name>(6R)-10-formyltetrahydrofolate</name>
        <dbReference type="ChEBI" id="CHEBI:195366"/>
    </ligand>
</feature>
<feature type="binding site" evidence="2">
    <location>
        <begin position="571"/>
        <end position="573"/>
    </location>
    <ligand>
        <name>NADP(+)</name>
        <dbReference type="ChEBI" id="CHEBI:58349"/>
    </ligand>
</feature>
<feature type="binding site" evidence="2">
    <location>
        <begin position="597"/>
        <end position="600"/>
    </location>
    <ligand>
        <name>NADP(+)</name>
        <dbReference type="ChEBI" id="CHEBI:58349"/>
    </ligand>
</feature>
<feature type="binding site" evidence="2">
    <location>
        <begin position="630"/>
        <end position="635"/>
    </location>
    <ligand>
        <name>NADP(+)</name>
        <dbReference type="ChEBI" id="CHEBI:58349"/>
    </ligand>
</feature>
<feature type="binding site" evidence="2">
    <location>
        <begin position="650"/>
        <end position="651"/>
    </location>
    <ligand>
        <name>NADP(+)</name>
        <dbReference type="ChEBI" id="CHEBI:58349"/>
    </ligand>
</feature>
<feature type="binding site" evidence="2">
    <location>
        <begin position="673"/>
        <end position="674"/>
    </location>
    <ligand>
        <name>NADP(+)</name>
        <dbReference type="ChEBI" id="CHEBI:58349"/>
    </ligand>
</feature>
<feature type="binding site" evidence="2">
    <location>
        <position position="757"/>
    </location>
    <ligand>
        <name>NADP(+)</name>
        <dbReference type="ChEBI" id="CHEBI:58349"/>
    </ligand>
</feature>
<feature type="binding site" evidence="2">
    <location>
        <begin position="804"/>
        <end position="806"/>
    </location>
    <ligand>
        <name>NADP(+)</name>
        <dbReference type="ChEBI" id="CHEBI:58349"/>
    </ligand>
</feature>
<feature type="site" description="Essential for catalytic activity" evidence="2">
    <location>
        <position position="142"/>
    </location>
</feature>
<feature type="modified residue" description="Phosphoserine" evidence="1">
    <location>
        <position position="9"/>
    </location>
</feature>
<feature type="modified residue" description="N6-succinyllysine" evidence="5">
    <location>
        <position position="38"/>
    </location>
</feature>
<feature type="modified residue" description="O-(pantetheine 4'-phosphoryl)serine" evidence="2 6">
    <location>
        <position position="354"/>
    </location>
</feature>
<feature type="modified residue" description="Phosphoserine" evidence="1">
    <location>
        <position position="629"/>
    </location>
</feature>
<feature type="modified residue" description="Phosphoserine" evidence="1">
    <location>
        <position position="631"/>
    </location>
</feature>
<feature type="modified residue" description="N6-succinyllysine" evidence="4">
    <location>
        <position position="660"/>
    </location>
</feature>
<feature type="modified residue" description="N6-succinyllysine" evidence="5">
    <location>
        <position position="767"/>
    </location>
</feature>
<feature type="modified residue" description="Phosphoserine" evidence="1">
    <location>
        <position position="825"/>
    </location>
</feature>
<feature type="modified residue" description="N6-acetyllysine" evidence="3">
    <location>
        <position position="882"/>
    </location>
</feature>
<comment type="function">
    <text evidence="2">Cytosolic 10-formyltetrahydrofolate dehydrogenase that catalyzes the NADP(+)-dependent conversion of 10-formyltetrahydrofolate to tetrahydrofolate and carbon dioxide. May also have an NADP(+)-dependent aldehyde dehydrogenase activity towards formaldehyde, acetaldehyde, propionaldehyde, and benzaldehyde.</text>
</comment>
<comment type="catalytic activity">
    <reaction evidence="2">
        <text>(6R)-10-formyltetrahydrofolate + NADP(+) + H2O = (6S)-5,6,7,8-tetrahydrofolate + CO2 + NADPH + H(+)</text>
        <dbReference type="Rhea" id="RHEA:10180"/>
        <dbReference type="ChEBI" id="CHEBI:15377"/>
        <dbReference type="ChEBI" id="CHEBI:15378"/>
        <dbReference type="ChEBI" id="CHEBI:16526"/>
        <dbReference type="ChEBI" id="CHEBI:57453"/>
        <dbReference type="ChEBI" id="CHEBI:57783"/>
        <dbReference type="ChEBI" id="CHEBI:58349"/>
        <dbReference type="ChEBI" id="CHEBI:195366"/>
        <dbReference type="EC" id="1.5.1.6"/>
    </reaction>
    <physiologicalReaction direction="left-to-right" evidence="2">
        <dbReference type="Rhea" id="RHEA:10181"/>
    </physiologicalReaction>
</comment>
<comment type="subunit">
    <text evidence="2">Homotetramer.</text>
</comment>
<comment type="subcellular location">
    <subcellularLocation>
        <location evidence="2">Cytoplasm</location>
        <location evidence="2">Cytosol</location>
    </subcellularLocation>
</comment>
<comment type="domain">
    <text evidence="2">The N-terminal hydrolase domain has an NADP-independent formyltetrahydrofolate hydrolase activity, releasing formate and tetrahydrofolate.</text>
</comment>
<comment type="domain">
    <text evidence="2">The C-terminal aldehyde dehydrogenase domain has an NADP-dependent dehydrogenase activity. It catalyzes the oxidation of formate, released by the hydrolysis of formyltetrahydrofolate, into CO2.</text>
</comment>
<comment type="domain">
    <text evidence="2">The carrier domain is phosphopantetheinylated and uses the 4'-phosphopantetheine/4'-PP swinging arm to transfer the formyl group released by the N-terminal formyltetrahydrofolate hydrolase activity to the C-terminal aldehyde dehydrogenase domain that catalyzes its NADP-dependent oxidation into CO2. The overall NADP-dependent physiological reaction requires the 3 domains (N-terminal hydrolase, C-terminal aldehyde dehydrogenase and carrier domains) to convert formyltetrahydrofolate into tetrahydrofolate and CO2.</text>
</comment>
<comment type="PTM">
    <text evidence="2">Phosphopantetheinylation at Ser-354 by AASDHPPT is required for the formyltetrahydrofolate dehydrogenase activity.</text>
</comment>
<comment type="similarity">
    <text evidence="7">In the N-terminal section; belongs to the GART family.</text>
</comment>
<comment type="similarity">
    <text evidence="7">In the C-terminal section; belongs to the aldehyde dehydrogenase family. ALDH1L subfamily.</text>
</comment>
<dbReference type="EC" id="1.5.1.6" evidence="2"/>
<dbReference type="EMBL" id="CR857124">
    <property type="protein sequence ID" value="CAH89428.1"/>
    <property type="molecule type" value="mRNA"/>
</dbReference>
<dbReference type="RefSeq" id="NP_001128736.1">
    <property type="nucleotide sequence ID" value="NM_001135264.1"/>
</dbReference>
<dbReference type="SMR" id="Q5RFM9"/>
<dbReference type="FunCoup" id="Q5RFM9">
    <property type="interactions" value="503"/>
</dbReference>
<dbReference type="STRING" id="9601.ENSPPYP00000015052"/>
<dbReference type="GeneID" id="100172380"/>
<dbReference type="CTD" id="10840"/>
<dbReference type="eggNOG" id="KOG2452">
    <property type="taxonomic scope" value="Eukaryota"/>
</dbReference>
<dbReference type="InParanoid" id="Q5RFM9"/>
<dbReference type="Proteomes" id="UP000001595">
    <property type="component" value="Unplaced"/>
</dbReference>
<dbReference type="GO" id="GO:0005829">
    <property type="term" value="C:cytosol"/>
    <property type="evidence" value="ECO:0000250"/>
    <property type="project" value="UniProtKB"/>
</dbReference>
<dbReference type="GO" id="GO:0016155">
    <property type="term" value="F:formyltetrahydrofolate dehydrogenase activity"/>
    <property type="evidence" value="ECO:0000250"/>
    <property type="project" value="UniProtKB"/>
</dbReference>
<dbReference type="GO" id="GO:0016620">
    <property type="term" value="F:oxidoreductase activity, acting on the aldehyde or oxo group of donors, NAD or NADP as acceptor"/>
    <property type="evidence" value="ECO:0007669"/>
    <property type="project" value="InterPro"/>
</dbReference>
<dbReference type="GO" id="GO:0009258">
    <property type="term" value="P:10-formyltetrahydrofolate catabolic process"/>
    <property type="evidence" value="ECO:0000250"/>
    <property type="project" value="UniProtKB"/>
</dbReference>
<dbReference type="GO" id="GO:0009058">
    <property type="term" value="P:biosynthetic process"/>
    <property type="evidence" value="ECO:0007669"/>
    <property type="project" value="InterPro"/>
</dbReference>
<dbReference type="GO" id="GO:0006740">
    <property type="term" value="P:NADPH regeneration"/>
    <property type="evidence" value="ECO:0000250"/>
    <property type="project" value="UniProtKB"/>
</dbReference>
<dbReference type="GO" id="GO:0006730">
    <property type="term" value="P:one-carbon metabolic process"/>
    <property type="evidence" value="ECO:0007669"/>
    <property type="project" value="UniProtKB-KW"/>
</dbReference>
<dbReference type="CDD" id="cd07140">
    <property type="entry name" value="ALDH_F1L_FTFDH"/>
    <property type="match status" value="1"/>
</dbReference>
<dbReference type="CDD" id="cd08703">
    <property type="entry name" value="FDH_Hydrolase_C"/>
    <property type="match status" value="1"/>
</dbReference>
<dbReference type="CDD" id="cd08647">
    <property type="entry name" value="FMT_core_FDH_N"/>
    <property type="match status" value="1"/>
</dbReference>
<dbReference type="FunFam" id="1.10.1200.10:FF:000002">
    <property type="entry name" value="10-formyltetrahydrofolate dehydrogenase"/>
    <property type="match status" value="1"/>
</dbReference>
<dbReference type="FunFam" id="3.10.25.10:FF:000002">
    <property type="entry name" value="10-formyltetrahydrofolate dehydrogenase"/>
    <property type="match status" value="1"/>
</dbReference>
<dbReference type="FunFam" id="3.40.50.170:FF:000002">
    <property type="entry name" value="10-formyltetrahydrofolate dehydrogenase"/>
    <property type="match status" value="1"/>
</dbReference>
<dbReference type="FunFam" id="3.40.605.10:FF:000026">
    <property type="entry name" value="Aldehyde dehydrogenase, putative"/>
    <property type="match status" value="1"/>
</dbReference>
<dbReference type="FunFam" id="3.40.309.10:FF:000008">
    <property type="entry name" value="Cytosolic 10-formyltetrahydrofolate dehydrogenase"/>
    <property type="match status" value="1"/>
</dbReference>
<dbReference type="FunFam" id="3.40.605.10:FF:000009">
    <property type="entry name" value="Cytosolic 10-formyltetrahydrofolate dehydrogenase"/>
    <property type="match status" value="1"/>
</dbReference>
<dbReference type="Gene3D" id="1.10.1200.10">
    <property type="entry name" value="ACP-like"/>
    <property type="match status" value="1"/>
</dbReference>
<dbReference type="Gene3D" id="3.40.605.10">
    <property type="entry name" value="Aldehyde Dehydrogenase, Chain A, domain 1"/>
    <property type="match status" value="1"/>
</dbReference>
<dbReference type="Gene3D" id="3.40.309.10">
    <property type="entry name" value="Aldehyde Dehydrogenase, Chain A, domain 2"/>
    <property type="match status" value="1"/>
</dbReference>
<dbReference type="Gene3D" id="3.10.25.10">
    <property type="entry name" value="Formyl transferase, C-terminal domain"/>
    <property type="match status" value="1"/>
</dbReference>
<dbReference type="Gene3D" id="3.40.50.170">
    <property type="entry name" value="Formyl transferase, N-terminal domain"/>
    <property type="match status" value="1"/>
</dbReference>
<dbReference type="InterPro" id="IPR011407">
    <property type="entry name" value="10_FTHF_DH"/>
</dbReference>
<dbReference type="InterPro" id="IPR036736">
    <property type="entry name" value="ACP-like_sf"/>
</dbReference>
<dbReference type="InterPro" id="IPR016161">
    <property type="entry name" value="Ald_DH/histidinol_DH"/>
</dbReference>
<dbReference type="InterPro" id="IPR016163">
    <property type="entry name" value="Ald_DH_C"/>
</dbReference>
<dbReference type="InterPro" id="IPR016160">
    <property type="entry name" value="Ald_DH_CS_CYS"/>
</dbReference>
<dbReference type="InterPro" id="IPR029510">
    <property type="entry name" value="Ald_DH_CS_GLU"/>
</dbReference>
<dbReference type="InterPro" id="IPR016162">
    <property type="entry name" value="Ald_DH_N"/>
</dbReference>
<dbReference type="InterPro" id="IPR015590">
    <property type="entry name" value="Aldehyde_DH_dom"/>
</dbReference>
<dbReference type="InterPro" id="IPR005793">
    <property type="entry name" value="Formyl_trans_C"/>
</dbReference>
<dbReference type="InterPro" id="IPR037022">
    <property type="entry name" value="Formyl_trans_C_sf"/>
</dbReference>
<dbReference type="InterPro" id="IPR002376">
    <property type="entry name" value="Formyl_transf_N"/>
</dbReference>
<dbReference type="InterPro" id="IPR036477">
    <property type="entry name" value="Formyl_transf_N_sf"/>
</dbReference>
<dbReference type="InterPro" id="IPR011034">
    <property type="entry name" value="Formyl_transferase-like_C_sf"/>
</dbReference>
<dbReference type="InterPro" id="IPR001555">
    <property type="entry name" value="GART_AS"/>
</dbReference>
<dbReference type="InterPro" id="IPR009081">
    <property type="entry name" value="PP-bd_ACP"/>
</dbReference>
<dbReference type="PANTHER" id="PTHR11699">
    <property type="entry name" value="ALDEHYDE DEHYDROGENASE-RELATED"/>
    <property type="match status" value="1"/>
</dbReference>
<dbReference type="Pfam" id="PF00171">
    <property type="entry name" value="Aldedh"/>
    <property type="match status" value="1"/>
</dbReference>
<dbReference type="Pfam" id="PF02911">
    <property type="entry name" value="Formyl_trans_C"/>
    <property type="match status" value="1"/>
</dbReference>
<dbReference type="Pfam" id="PF00551">
    <property type="entry name" value="Formyl_trans_N"/>
    <property type="match status" value="1"/>
</dbReference>
<dbReference type="Pfam" id="PF00550">
    <property type="entry name" value="PP-binding"/>
    <property type="match status" value="1"/>
</dbReference>
<dbReference type="PIRSF" id="PIRSF036489">
    <property type="entry name" value="10-FTHFDH"/>
    <property type="match status" value="1"/>
</dbReference>
<dbReference type="SUPFAM" id="SSF47336">
    <property type="entry name" value="ACP-like"/>
    <property type="match status" value="1"/>
</dbReference>
<dbReference type="SUPFAM" id="SSF53720">
    <property type="entry name" value="ALDH-like"/>
    <property type="match status" value="1"/>
</dbReference>
<dbReference type="SUPFAM" id="SSF50486">
    <property type="entry name" value="FMT C-terminal domain-like"/>
    <property type="match status" value="1"/>
</dbReference>
<dbReference type="SUPFAM" id="SSF53328">
    <property type="entry name" value="Formyltransferase"/>
    <property type="match status" value="1"/>
</dbReference>
<dbReference type="PROSITE" id="PS00070">
    <property type="entry name" value="ALDEHYDE_DEHYDR_CYS"/>
    <property type="match status" value="1"/>
</dbReference>
<dbReference type="PROSITE" id="PS00687">
    <property type="entry name" value="ALDEHYDE_DEHYDR_GLU"/>
    <property type="match status" value="1"/>
</dbReference>
<dbReference type="PROSITE" id="PS50075">
    <property type="entry name" value="CARRIER"/>
    <property type="match status" value="1"/>
</dbReference>
<dbReference type="PROSITE" id="PS00373">
    <property type="entry name" value="GART"/>
    <property type="match status" value="1"/>
</dbReference>
<organism>
    <name type="scientific">Pongo abelii</name>
    <name type="common">Sumatran orangutan</name>
    <name type="synonym">Pongo pygmaeus abelii</name>
    <dbReference type="NCBI Taxonomy" id="9601"/>
    <lineage>
        <taxon>Eukaryota</taxon>
        <taxon>Metazoa</taxon>
        <taxon>Chordata</taxon>
        <taxon>Craniata</taxon>
        <taxon>Vertebrata</taxon>
        <taxon>Euteleostomi</taxon>
        <taxon>Mammalia</taxon>
        <taxon>Eutheria</taxon>
        <taxon>Euarchontoglires</taxon>
        <taxon>Primates</taxon>
        <taxon>Haplorrhini</taxon>
        <taxon>Catarrhini</taxon>
        <taxon>Hominidae</taxon>
        <taxon>Pongo</taxon>
    </lineage>
</organism>
<proteinExistence type="evidence at transcript level"/>
<sequence>MKIAVIGQSLFGQEVYCHLRKEGHEVVGGFTVPDKDGKADPLGLEAEKDGVPVFKFSRWRAKGQALPDVVAKYQALGAELNVLPFCSQFIPMEIINAPQHGSIIYHPSLLPRHRGASAINWTLIHGDKKGGFSIFWADDGLDTGDLLLQKECEVLPDDTVSTLYNRFLFPEGIKGMVQAVRLIAEGKAPRLPQPEEGATYEGIQKKETAKINWDQPAEAIHNWIRGNDKVPGAWTEACEQKLTFFNSTLNTSGLVPEGDALPIPGAHRPGVVTKAGLILFGNDDKMLLVKNIQLEDGKMILASNFFKGAASSALELTEAELVTAEAVRSVWQRILPNVLEVEDSTDFFKSGAASVDVVRLVEEVKELCDGLELENEDVYMASTFGDFIQLLVRKLRGDDEEGECSIDYVEMAVNKRTIRIPHQLFIGGEFVDAEGAKTYETINPTDGSVICQVSLAQVTDVDKAVAAAKDAFENGRWGKISARDRGRLLYRLADLMEQHQEELATIEALDAGAVYTLALKTHVGMSIQTFRYFAGWCDKIQGSTIPINQARPNRNLTLTRKEPVGVCGIIIPWNYPLMMLSWKTAACLAAGNTVVIKPAQVTPLTALKFAELTLKAGIPKGVVNVLPGSGSLVGQRLSDHPDVRKIGFTGSTEVGKHIMKSCAISNVKKVSLELGGKSPLIIFADCDLNKAVQMGMSSVFFNKGENCIAAGRLFVEDSIHDEFVRRVVEEVRKMKVGDPLDRDTDHGPQNHHAHLMKLMEYCQRGVKEGATLVCGGNQVPRPGFFFEPTVFTDVEDHMFIAKEESFGPVMIISRFADGDVDTVLSRANATEFGLASGVFTRDINKALYVSDKLQAGTVFVNTYNKTDVAAPFGGFKQSGFGKDLGEAALNEYLRVKTVTFEY</sequence>
<evidence type="ECO:0000250" key="1">
    <source>
        <dbReference type="UniProtKB" id="O75891"/>
    </source>
</evidence>
<evidence type="ECO:0000250" key="2">
    <source>
        <dbReference type="UniProtKB" id="P28037"/>
    </source>
</evidence>
<evidence type="ECO:0000250" key="3">
    <source>
        <dbReference type="UniProtKB" id="Q3SY69"/>
    </source>
</evidence>
<evidence type="ECO:0000250" key="4">
    <source>
        <dbReference type="UniProtKB" id="Q8K009"/>
    </source>
</evidence>
<evidence type="ECO:0000250" key="5">
    <source>
        <dbReference type="UniProtKB" id="Q8R0Y6"/>
    </source>
</evidence>
<evidence type="ECO:0000255" key="6">
    <source>
        <dbReference type="PROSITE-ProRule" id="PRU00258"/>
    </source>
</evidence>
<evidence type="ECO:0000305" key="7"/>
<keyword id="KW-0007">Acetylation</keyword>
<keyword id="KW-0963">Cytoplasm</keyword>
<keyword id="KW-0521">NADP</keyword>
<keyword id="KW-0554">One-carbon metabolism</keyword>
<keyword id="KW-0560">Oxidoreductase</keyword>
<keyword id="KW-0596">Phosphopantetheine</keyword>
<keyword id="KW-0597">Phosphoprotein</keyword>
<keyword id="KW-1185">Reference proteome</keyword>
<protein>
    <recommendedName>
        <fullName evidence="7">Cytosolic 10-formyltetrahydrofolate dehydrogenase</fullName>
        <shortName>10-FTHFDH</shortName>
        <shortName>FDH</shortName>
        <ecNumber evidence="2">1.5.1.6</ecNumber>
    </recommendedName>
    <alternativeName>
        <fullName evidence="1">Aldehyde dehydrogenase family 1 member L1</fullName>
    </alternativeName>
</protein>
<gene>
    <name evidence="1" type="primary">ALDH1L1</name>
    <name type="synonym">FTHFD</name>
</gene>